<evidence type="ECO:0000255" key="1">
    <source>
        <dbReference type="HAMAP-Rule" id="MF_01398"/>
    </source>
</evidence>
<protein>
    <recommendedName>
        <fullName evidence="1">ATP synthase subunit b</fullName>
    </recommendedName>
    <alternativeName>
        <fullName evidence="1">ATP synthase F(0) sector subunit b</fullName>
    </alternativeName>
    <alternativeName>
        <fullName evidence="1">ATPase subunit I</fullName>
    </alternativeName>
    <alternativeName>
        <fullName evidence="1">F-type ATPase subunit b</fullName>
        <shortName evidence="1">F-ATPase subunit b</shortName>
    </alternativeName>
</protein>
<accession>A1AXU6</accession>
<keyword id="KW-0066">ATP synthesis</keyword>
<keyword id="KW-0997">Cell inner membrane</keyword>
<keyword id="KW-1003">Cell membrane</keyword>
<keyword id="KW-0138">CF(0)</keyword>
<keyword id="KW-0375">Hydrogen ion transport</keyword>
<keyword id="KW-0406">Ion transport</keyword>
<keyword id="KW-0472">Membrane</keyword>
<keyword id="KW-0812">Transmembrane</keyword>
<keyword id="KW-1133">Transmembrane helix</keyword>
<keyword id="KW-0813">Transport</keyword>
<name>ATPF_RUTMC</name>
<feature type="chain" id="PRO_0000368733" description="ATP synthase subunit b">
    <location>
        <begin position="1"/>
        <end position="157"/>
    </location>
</feature>
<feature type="transmembrane region" description="Helical" evidence="1">
    <location>
        <begin position="7"/>
        <end position="29"/>
    </location>
</feature>
<organism>
    <name type="scientific">Ruthia magnifica subsp. Calyptogena magnifica</name>
    <dbReference type="NCBI Taxonomy" id="413404"/>
    <lineage>
        <taxon>Bacteria</taxon>
        <taxon>Pseudomonadati</taxon>
        <taxon>Pseudomonadota</taxon>
        <taxon>Gammaproteobacteria</taxon>
        <taxon>Candidatus Pseudothioglobaceae</taxon>
        <taxon>Candidatus Ruthturnera</taxon>
    </lineage>
</organism>
<proteinExistence type="inferred from homology"/>
<sequence length="157" mass="17783">MNINLTMFGQLIMFTMFTWFCMKFVWPPIVMTMEERKKRIESGLLAAERGRSEQEEMQAKAQEMINQSKDQAAEIIANATRQASNMVEDAKDVALKEAGKVKAQAQAQLEQDTIQTRNELKNQMSDLIMQGVSVVLAKEVDVKVHQKMLGKLSQSLS</sequence>
<dbReference type="EMBL" id="CP000488">
    <property type="protein sequence ID" value="ABL02753.1"/>
    <property type="molecule type" value="Genomic_DNA"/>
</dbReference>
<dbReference type="RefSeq" id="WP_011738378.1">
    <property type="nucleotide sequence ID" value="NC_008610.1"/>
</dbReference>
<dbReference type="SMR" id="A1AXU6"/>
<dbReference type="STRING" id="413404.Rmag_1049"/>
<dbReference type="KEGG" id="rma:Rmag_1049"/>
<dbReference type="eggNOG" id="COG0711">
    <property type="taxonomic scope" value="Bacteria"/>
</dbReference>
<dbReference type="HOGENOM" id="CLU_079215_4_5_6"/>
<dbReference type="OrthoDB" id="9788020at2"/>
<dbReference type="Proteomes" id="UP000002587">
    <property type="component" value="Chromosome"/>
</dbReference>
<dbReference type="GO" id="GO:0005886">
    <property type="term" value="C:plasma membrane"/>
    <property type="evidence" value="ECO:0007669"/>
    <property type="project" value="UniProtKB-SubCell"/>
</dbReference>
<dbReference type="GO" id="GO:0045259">
    <property type="term" value="C:proton-transporting ATP synthase complex"/>
    <property type="evidence" value="ECO:0007669"/>
    <property type="project" value="UniProtKB-KW"/>
</dbReference>
<dbReference type="GO" id="GO:0046933">
    <property type="term" value="F:proton-transporting ATP synthase activity, rotational mechanism"/>
    <property type="evidence" value="ECO:0007669"/>
    <property type="project" value="UniProtKB-UniRule"/>
</dbReference>
<dbReference type="GO" id="GO:0046961">
    <property type="term" value="F:proton-transporting ATPase activity, rotational mechanism"/>
    <property type="evidence" value="ECO:0007669"/>
    <property type="project" value="TreeGrafter"/>
</dbReference>
<dbReference type="CDD" id="cd06503">
    <property type="entry name" value="ATP-synt_Fo_b"/>
    <property type="match status" value="1"/>
</dbReference>
<dbReference type="Gene3D" id="6.10.250.1580">
    <property type="match status" value="1"/>
</dbReference>
<dbReference type="HAMAP" id="MF_01398">
    <property type="entry name" value="ATP_synth_b_bprime"/>
    <property type="match status" value="1"/>
</dbReference>
<dbReference type="InterPro" id="IPR028987">
    <property type="entry name" value="ATP_synth_B-like_membr_sf"/>
</dbReference>
<dbReference type="InterPro" id="IPR002146">
    <property type="entry name" value="ATP_synth_b/b'su_bac/chlpt"/>
</dbReference>
<dbReference type="InterPro" id="IPR005864">
    <property type="entry name" value="ATP_synth_F0_bsu_bac"/>
</dbReference>
<dbReference type="InterPro" id="IPR050059">
    <property type="entry name" value="ATP_synthase_B_chain"/>
</dbReference>
<dbReference type="NCBIfam" id="TIGR01144">
    <property type="entry name" value="ATP_synt_b"/>
    <property type="match status" value="1"/>
</dbReference>
<dbReference type="NCBIfam" id="NF004411">
    <property type="entry name" value="PRK05759.1-2"/>
    <property type="match status" value="1"/>
</dbReference>
<dbReference type="PANTHER" id="PTHR33445:SF1">
    <property type="entry name" value="ATP SYNTHASE SUBUNIT B"/>
    <property type="match status" value="1"/>
</dbReference>
<dbReference type="PANTHER" id="PTHR33445">
    <property type="entry name" value="ATP SYNTHASE SUBUNIT B', CHLOROPLASTIC"/>
    <property type="match status" value="1"/>
</dbReference>
<dbReference type="Pfam" id="PF00430">
    <property type="entry name" value="ATP-synt_B"/>
    <property type="match status" value="1"/>
</dbReference>
<dbReference type="SUPFAM" id="SSF81573">
    <property type="entry name" value="F1F0 ATP synthase subunit B, membrane domain"/>
    <property type="match status" value="1"/>
</dbReference>
<reference key="1">
    <citation type="journal article" date="2007" name="Science">
        <title>The Calyptogena magnifica chemoautotrophic symbiont genome.</title>
        <authorList>
            <person name="Newton I.L.G."/>
            <person name="Woyke T."/>
            <person name="Auchtung T.A."/>
            <person name="Dilly G.F."/>
            <person name="Dutton R.J."/>
            <person name="Fisher M.C."/>
            <person name="Fontanez K.M."/>
            <person name="Lau E."/>
            <person name="Stewart F.J."/>
            <person name="Richardson P.M."/>
            <person name="Barry K.W."/>
            <person name="Saunders E."/>
            <person name="Detter J.C."/>
            <person name="Wu D."/>
            <person name="Eisen J.A."/>
            <person name="Cavanaugh C.M."/>
        </authorList>
    </citation>
    <scope>NUCLEOTIDE SEQUENCE [LARGE SCALE GENOMIC DNA]</scope>
</reference>
<gene>
    <name evidence="1" type="primary">atpF</name>
    <name type="ordered locus">Rmag_1049</name>
</gene>
<comment type="function">
    <text evidence="1">F(1)F(0) ATP synthase produces ATP from ADP in the presence of a proton or sodium gradient. F-type ATPases consist of two structural domains, F(1) containing the extramembraneous catalytic core and F(0) containing the membrane proton channel, linked together by a central stalk and a peripheral stalk. During catalysis, ATP synthesis in the catalytic domain of F(1) is coupled via a rotary mechanism of the central stalk subunits to proton translocation.</text>
</comment>
<comment type="function">
    <text evidence="1">Component of the F(0) channel, it forms part of the peripheral stalk, linking F(1) to F(0).</text>
</comment>
<comment type="subunit">
    <text evidence="1">F-type ATPases have 2 components, F(1) - the catalytic core - and F(0) - the membrane proton channel. F(1) has five subunits: alpha(3), beta(3), gamma(1), delta(1), epsilon(1). F(0) has three main subunits: a(1), b(2) and c(10-14). The alpha and beta chains form an alternating ring which encloses part of the gamma chain. F(1) is attached to F(0) by a central stalk formed by the gamma and epsilon chains, while a peripheral stalk is formed by the delta and b chains.</text>
</comment>
<comment type="subcellular location">
    <subcellularLocation>
        <location evidence="1">Cell inner membrane</location>
        <topology evidence="1">Single-pass membrane protein</topology>
    </subcellularLocation>
</comment>
<comment type="similarity">
    <text evidence="1">Belongs to the ATPase B chain family.</text>
</comment>